<comment type="function">
    <text evidence="2">Catalyzes the formation of N(7)-methylguanine at position 46 (m7G46) in tRNA.</text>
</comment>
<comment type="catalytic activity">
    <reaction evidence="2">
        <text>guanosine(46) in tRNA + S-adenosyl-L-methionine = N(7)-methylguanosine(46) in tRNA + S-adenosyl-L-homocysteine</text>
        <dbReference type="Rhea" id="RHEA:42708"/>
        <dbReference type="Rhea" id="RHEA-COMP:10188"/>
        <dbReference type="Rhea" id="RHEA-COMP:10189"/>
        <dbReference type="ChEBI" id="CHEBI:57856"/>
        <dbReference type="ChEBI" id="CHEBI:59789"/>
        <dbReference type="ChEBI" id="CHEBI:74269"/>
        <dbReference type="ChEBI" id="CHEBI:74480"/>
        <dbReference type="EC" id="2.1.1.33"/>
    </reaction>
</comment>
<comment type="pathway">
    <text evidence="2">tRNA modification; N(7)-methylguanine-tRNA biosynthesis.</text>
</comment>
<comment type="similarity">
    <text evidence="2">Belongs to the class I-like SAM-binding methyltransferase superfamily. TrmB family.</text>
</comment>
<feature type="chain" id="PRO_0000171339" description="tRNA (guanine-N(7)-)-methyltransferase">
    <location>
        <begin position="1"/>
        <end position="214"/>
    </location>
</feature>
<feature type="region of interest" description="Interaction with RNA" evidence="2">
    <location>
        <begin position="124"/>
        <end position="129"/>
    </location>
</feature>
<feature type="active site" evidence="1">
    <location>
        <position position="118"/>
    </location>
</feature>
<feature type="binding site" evidence="2">
    <location>
        <position position="44"/>
    </location>
    <ligand>
        <name>S-adenosyl-L-methionine</name>
        <dbReference type="ChEBI" id="CHEBI:59789"/>
    </ligand>
</feature>
<feature type="binding site" evidence="2">
    <location>
        <position position="69"/>
    </location>
    <ligand>
        <name>S-adenosyl-L-methionine</name>
        <dbReference type="ChEBI" id="CHEBI:59789"/>
    </ligand>
</feature>
<feature type="binding site" evidence="2">
    <location>
        <position position="96"/>
    </location>
    <ligand>
        <name>S-adenosyl-L-methionine</name>
        <dbReference type="ChEBI" id="CHEBI:59789"/>
    </ligand>
</feature>
<feature type="binding site" evidence="2">
    <location>
        <position position="118"/>
    </location>
    <ligand>
        <name>S-adenosyl-L-methionine</name>
        <dbReference type="ChEBI" id="CHEBI:59789"/>
    </ligand>
</feature>
<feature type="binding site" evidence="2">
    <location>
        <position position="122"/>
    </location>
    <ligand>
        <name>substrate</name>
    </ligand>
</feature>
<feature type="binding site" evidence="2">
    <location>
        <position position="154"/>
    </location>
    <ligand>
        <name>substrate</name>
    </ligand>
</feature>
<feature type="binding site" evidence="2">
    <location>
        <begin position="192"/>
        <end position="195"/>
    </location>
    <ligand>
        <name>substrate</name>
    </ligand>
</feature>
<name>TRMB_LACPL</name>
<proteinExistence type="inferred from homology"/>
<accession>Q88WZ9</accession>
<accession>F9UNJ9</accession>
<organism>
    <name type="scientific">Lactiplantibacillus plantarum (strain ATCC BAA-793 / NCIMB 8826 / WCFS1)</name>
    <name type="common">Lactobacillus plantarum</name>
    <dbReference type="NCBI Taxonomy" id="220668"/>
    <lineage>
        <taxon>Bacteria</taxon>
        <taxon>Bacillati</taxon>
        <taxon>Bacillota</taxon>
        <taxon>Bacilli</taxon>
        <taxon>Lactobacillales</taxon>
        <taxon>Lactobacillaceae</taxon>
        <taxon>Lactiplantibacillus</taxon>
    </lineage>
</organism>
<keyword id="KW-0489">Methyltransferase</keyword>
<keyword id="KW-1185">Reference proteome</keyword>
<keyword id="KW-0949">S-adenosyl-L-methionine</keyword>
<keyword id="KW-0808">Transferase</keyword>
<keyword id="KW-0819">tRNA processing</keyword>
<protein>
    <recommendedName>
        <fullName evidence="2">tRNA (guanine-N(7)-)-methyltransferase</fullName>
        <ecNumber evidence="2">2.1.1.33</ecNumber>
    </recommendedName>
    <alternativeName>
        <fullName evidence="2">tRNA (guanine(46)-N(7))-methyltransferase</fullName>
    </alternativeName>
    <alternativeName>
        <fullName evidence="2">tRNA(m7G46)-methyltransferase</fullName>
    </alternativeName>
</protein>
<dbReference type="EC" id="2.1.1.33" evidence="2"/>
<dbReference type="EMBL" id="AL935263">
    <property type="protein sequence ID" value="CCC78788.1"/>
    <property type="molecule type" value="Genomic_DNA"/>
</dbReference>
<dbReference type="RefSeq" id="WP_003644279.1">
    <property type="nucleotide sequence ID" value="NC_004567.2"/>
</dbReference>
<dbReference type="RefSeq" id="YP_004889302.1">
    <property type="nucleotide sequence ID" value="NC_004567.2"/>
</dbReference>
<dbReference type="SMR" id="Q88WZ9"/>
<dbReference type="STRING" id="220668.lp_1458"/>
<dbReference type="EnsemblBacteria" id="CCC78788">
    <property type="protein sequence ID" value="CCC78788"/>
    <property type="gene ID" value="lp_1458"/>
</dbReference>
<dbReference type="GeneID" id="77217891"/>
<dbReference type="KEGG" id="lpl:lp_1458"/>
<dbReference type="PATRIC" id="fig|220668.9.peg.1221"/>
<dbReference type="eggNOG" id="COG0220">
    <property type="taxonomic scope" value="Bacteria"/>
</dbReference>
<dbReference type="HOGENOM" id="CLU_050910_2_1_9"/>
<dbReference type="OrthoDB" id="9802090at2"/>
<dbReference type="PhylomeDB" id="Q88WZ9"/>
<dbReference type="UniPathway" id="UPA00989"/>
<dbReference type="Proteomes" id="UP000000432">
    <property type="component" value="Chromosome"/>
</dbReference>
<dbReference type="GO" id="GO:0043527">
    <property type="term" value="C:tRNA methyltransferase complex"/>
    <property type="evidence" value="ECO:0007669"/>
    <property type="project" value="TreeGrafter"/>
</dbReference>
<dbReference type="GO" id="GO:0008176">
    <property type="term" value="F:tRNA (guanine(46)-N7)-methyltransferase activity"/>
    <property type="evidence" value="ECO:0007669"/>
    <property type="project" value="UniProtKB-UniRule"/>
</dbReference>
<dbReference type="CDD" id="cd02440">
    <property type="entry name" value="AdoMet_MTases"/>
    <property type="match status" value="1"/>
</dbReference>
<dbReference type="FunFam" id="3.40.50.150:FF:000035">
    <property type="entry name" value="tRNA (guanine-N(7)-)-methyltransferase"/>
    <property type="match status" value="1"/>
</dbReference>
<dbReference type="Gene3D" id="3.40.50.150">
    <property type="entry name" value="Vaccinia Virus protein VP39"/>
    <property type="match status" value="1"/>
</dbReference>
<dbReference type="HAMAP" id="MF_01057">
    <property type="entry name" value="tRNA_methyltr_TrmB"/>
    <property type="match status" value="1"/>
</dbReference>
<dbReference type="InterPro" id="IPR029063">
    <property type="entry name" value="SAM-dependent_MTases_sf"/>
</dbReference>
<dbReference type="InterPro" id="IPR003358">
    <property type="entry name" value="tRNA_(Gua-N-7)_MeTrfase_Trmb"/>
</dbReference>
<dbReference type="InterPro" id="IPR055361">
    <property type="entry name" value="tRNA_methyltr_TrmB_bact"/>
</dbReference>
<dbReference type="NCBIfam" id="NF001080">
    <property type="entry name" value="PRK00121.2-2"/>
    <property type="match status" value="1"/>
</dbReference>
<dbReference type="NCBIfam" id="TIGR00091">
    <property type="entry name" value="tRNA (guanosine(46)-N7)-methyltransferase TrmB"/>
    <property type="match status" value="1"/>
</dbReference>
<dbReference type="PANTHER" id="PTHR23417">
    <property type="entry name" value="3-DEOXY-D-MANNO-OCTULOSONIC-ACID TRANSFERASE/TRNA GUANINE-N 7 - -METHYLTRANSFERASE"/>
    <property type="match status" value="1"/>
</dbReference>
<dbReference type="PANTHER" id="PTHR23417:SF14">
    <property type="entry name" value="PENTACOTRIPEPTIDE-REPEAT REGION OF PRORP DOMAIN-CONTAINING PROTEIN"/>
    <property type="match status" value="1"/>
</dbReference>
<dbReference type="Pfam" id="PF02390">
    <property type="entry name" value="Methyltransf_4"/>
    <property type="match status" value="1"/>
</dbReference>
<dbReference type="SUPFAM" id="SSF53335">
    <property type="entry name" value="S-adenosyl-L-methionine-dependent methyltransferases"/>
    <property type="match status" value="1"/>
</dbReference>
<dbReference type="PROSITE" id="PS51625">
    <property type="entry name" value="SAM_MT_TRMB"/>
    <property type="match status" value="1"/>
</dbReference>
<reference key="1">
    <citation type="journal article" date="2003" name="Proc. Natl. Acad. Sci. U.S.A.">
        <title>Complete genome sequence of Lactobacillus plantarum WCFS1.</title>
        <authorList>
            <person name="Kleerebezem M."/>
            <person name="Boekhorst J."/>
            <person name="van Kranenburg R."/>
            <person name="Molenaar D."/>
            <person name="Kuipers O.P."/>
            <person name="Leer R."/>
            <person name="Tarchini R."/>
            <person name="Peters S.A."/>
            <person name="Sandbrink H.M."/>
            <person name="Fiers M.W.E.J."/>
            <person name="Stiekema W."/>
            <person name="Klein Lankhorst R.M."/>
            <person name="Bron P.A."/>
            <person name="Hoffer S.M."/>
            <person name="Nierop Groot M.N."/>
            <person name="Kerkhoven R."/>
            <person name="De Vries M."/>
            <person name="Ursing B."/>
            <person name="De Vos W.M."/>
            <person name="Siezen R.J."/>
        </authorList>
    </citation>
    <scope>NUCLEOTIDE SEQUENCE [LARGE SCALE GENOMIC DNA]</scope>
    <source>
        <strain>ATCC BAA-793 / NCIMB 8826 / WCFS1</strain>
    </source>
</reference>
<reference key="2">
    <citation type="journal article" date="2012" name="J. Bacteriol.">
        <title>Complete resequencing and reannotation of the Lactobacillus plantarum WCFS1 genome.</title>
        <authorList>
            <person name="Siezen R.J."/>
            <person name="Francke C."/>
            <person name="Renckens B."/>
            <person name="Boekhorst J."/>
            <person name="Wels M."/>
            <person name="Kleerebezem M."/>
            <person name="van Hijum S.A."/>
        </authorList>
    </citation>
    <scope>NUCLEOTIDE SEQUENCE [LARGE SCALE GENOMIC DNA]</scope>
    <scope>GENOME REANNOTATION</scope>
    <source>
        <strain>ATCC BAA-793 / NCIMB 8826 / WCFS1</strain>
    </source>
</reference>
<evidence type="ECO:0000250" key="1"/>
<evidence type="ECO:0000255" key="2">
    <source>
        <dbReference type="HAMAP-Rule" id="MF_01057"/>
    </source>
</evidence>
<sequence>MRVRNKPWAPKLIAAHPELITEDPTQLKGRWQSRFAKPQPLQIEVGSGKGQFIIEMAKRHPEINYVAIEIQTSVIAIILKKLVEAPLPNLQLAHADGQAVTAFFEPHEVDRLYLNFSDPWPKSRHEKRRLTYKSFLSSYREVLKPNGQIEFKTDNRGLFEFSLTSMNNFGMQFEQVWLDLHAVATPEDNVETEYEQKFSAAGPIYKIIATFPAK</sequence>
<gene>
    <name evidence="2" type="primary">trmB</name>
    <name type="ordered locus">lp_1458</name>
</gene>